<dbReference type="EMBL" id="Z25520">
    <property type="protein sequence ID" value="CAA80976.1"/>
    <property type="molecule type" value="mRNA"/>
</dbReference>
<dbReference type="PIR" id="B48586">
    <property type="entry name" value="B48586"/>
</dbReference>
<dbReference type="SMR" id="Q08876"/>
<dbReference type="eggNOG" id="KOG1721">
    <property type="taxonomic scope" value="Eukaryota"/>
</dbReference>
<dbReference type="OrthoDB" id="654211at2759"/>
<dbReference type="ChiTaRS" id="su(Hw)">
    <property type="organism name" value="fly"/>
</dbReference>
<dbReference type="GO" id="GO:0000785">
    <property type="term" value="C:chromatin"/>
    <property type="evidence" value="ECO:0007669"/>
    <property type="project" value="EnsemblMetazoa"/>
</dbReference>
<dbReference type="GO" id="GO:0005634">
    <property type="term" value="C:nucleus"/>
    <property type="evidence" value="ECO:0007669"/>
    <property type="project" value="UniProtKB-SubCell"/>
</dbReference>
<dbReference type="GO" id="GO:0043035">
    <property type="term" value="F:chromatin insulator sequence binding"/>
    <property type="evidence" value="ECO:0007669"/>
    <property type="project" value="EnsemblMetazoa"/>
</dbReference>
<dbReference type="GO" id="GO:1990188">
    <property type="term" value="F:euchromatin binding"/>
    <property type="evidence" value="ECO:0007669"/>
    <property type="project" value="EnsemblMetazoa"/>
</dbReference>
<dbReference type="GO" id="GO:0043565">
    <property type="term" value="F:sequence-specific DNA binding"/>
    <property type="evidence" value="ECO:0007669"/>
    <property type="project" value="EnsemblMetazoa"/>
</dbReference>
<dbReference type="GO" id="GO:0008270">
    <property type="term" value="F:zinc ion binding"/>
    <property type="evidence" value="ECO:0007669"/>
    <property type="project" value="UniProtKB-KW"/>
</dbReference>
<dbReference type="GO" id="GO:0033696">
    <property type="term" value="P:heterochromatin boundary formation"/>
    <property type="evidence" value="ECO:0007669"/>
    <property type="project" value="EnsemblMetazoa"/>
</dbReference>
<dbReference type="GO" id="GO:0045892">
    <property type="term" value="P:negative regulation of DNA-templated transcription"/>
    <property type="evidence" value="ECO:0007669"/>
    <property type="project" value="EnsemblMetazoa"/>
</dbReference>
<dbReference type="GO" id="GO:1905632">
    <property type="term" value="P:protein localization to euchromatin"/>
    <property type="evidence" value="ECO:0007669"/>
    <property type="project" value="EnsemblMetazoa"/>
</dbReference>
<dbReference type="GO" id="GO:0035075">
    <property type="term" value="P:response to ecdysone"/>
    <property type="evidence" value="ECO:0007669"/>
    <property type="project" value="EnsemblMetazoa"/>
</dbReference>
<dbReference type="FunFam" id="3.30.160.60:FF:002689">
    <property type="entry name" value="Protein suppressor of hairy wing"/>
    <property type="match status" value="1"/>
</dbReference>
<dbReference type="FunFam" id="3.30.160.60:FF:000690">
    <property type="entry name" value="Zinc finger protein 354C"/>
    <property type="match status" value="1"/>
</dbReference>
<dbReference type="FunFam" id="3.30.160.60:FF:000912">
    <property type="entry name" value="Zinc finger protein 660"/>
    <property type="match status" value="1"/>
</dbReference>
<dbReference type="FunFam" id="3.30.160.60:FF:000495">
    <property type="entry name" value="zinc finger protein 668"/>
    <property type="match status" value="1"/>
</dbReference>
<dbReference type="Gene3D" id="3.30.160.60">
    <property type="entry name" value="Classic Zinc Finger"/>
    <property type="match status" value="8"/>
</dbReference>
<dbReference type="InterPro" id="IPR050331">
    <property type="entry name" value="Zinc_finger"/>
</dbReference>
<dbReference type="InterPro" id="IPR036236">
    <property type="entry name" value="Znf_C2H2_sf"/>
</dbReference>
<dbReference type="InterPro" id="IPR013087">
    <property type="entry name" value="Znf_C2H2_type"/>
</dbReference>
<dbReference type="PANTHER" id="PTHR16515:SF66">
    <property type="entry name" value="C2H2-TYPE DOMAIN-CONTAINING PROTEIN"/>
    <property type="match status" value="1"/>
</dbReference>
<dbReference type="PANTHER" id="PTHR16515">
    <property type="entry name" value="PR DOMAIN ZINC FINGER PROTEIN"/>
    <property type="match status" value="1"/>
</dbReference>
<dbReference type="Pfam" id="PF00096">
    <property type="entry name" value="zf-C2H2"/>
    <property type="match status" value="8"/>
</dbReference>
<dbReference type="SMART" id="SM00355">
    <property type="entry name" value="ZnF_C2H2"/>
    <property type="match status" value="12"/>
</dbReference>
<dbReference type="SUPFAM" id="SSF57667">
    <property type="entry name" value="beta-beta-alpha zinc fingers"/>
    <property type="match status" value="5"/>
</dbReference>
<dbReference type="PROSITE" id="PS00028">
    <property type="entry name" value="ZINC_FINGER_C2H2_1"/>
    <property type="match status" value="10"/>
</dbReference>
<dbReference type="PROSITE" id="PS50157">
    <property type="entry name" value="ZINC_FINGER_C2H2_2"/>
    <property type="match status" value="10"/>
</dbReference>
<reference key="1">
    <citation type="journal article" date="1993" name="Genes Dev.">
        <title>A leucine zipper domain of the suppressor of Hairy-wing protein mediates its repressive effect on enhancer function.</title>
        <authorList>
            <person name="Harrison D.A."/>
            <person name="Gdula D.A."/>
            <person name="Coyne R.S."/>
            <person name="Corces V.G."/>
        </authorList>
    </citation>
    <scope>NUCLEOTIDE SEQUENCE [MRNA]</scope>
</reference>
<protein>
    <recommendedName>
        <fullName>Protein suppressor of hairy wing</fullName>
    </recommendedName>
</protein>
<proteinExistence type="evidence at transcript level"/>
<keyword id="KW-0238">DNA-binding</keyword>
<keyword id="KW-0479">Metal-binding</keyword>
<keyword id="KW-0539">Nucleus</keyword>
<keyword id="KW-0677">Repeat</keyword>
<keyword id="KW-0804">Transcription</keyword>
<keyword id="KW-0805">Transcription regulation</keyword>
<keyword id="KW-0862">Zinc</keyword>
<keyword id="KW-0863">Zinc-finger</keyword>
<evidence type="ECO:0000250" key="1">
    <source>
        <dbReference type="UniProtKB" id="P08970"/>
    </source>
</evidence>
<evidence type="ECO:0000255" key="2">
    <source>
        <dbReference type="PROSITE-ProRule" id="PRU00042"/>
    </source>
</evidence>
<evidence type="ECO:0000256" key="3">
    <source>
        <dbReference type="SAM" id="MobiDB-lite"/>
    </source>
</evidence>
<sequence>MSAQEDALPATPPASSSIKISDGDKPKEKRTGTRMKLLNDVAAKAAVASKGASVSPRLKPEKRTSIKILNNNNNDEAQTSTKGGDSVPRPKPPAPASRYRTRSSAPASSAVETAKIKTSPSKKKKMDHYVLQAIKSENNKAENTTSVVVVEDEDTIDFILADDEVELGAGAKENGEEFVVSGVDEDDDDDDDDEDEGVVEGGAKRRSGNNELKEMVEHVCGKCYKTFRRVKSLKKHLEFCRYDSGYHLRKADMLKNLEKIEKDAVVMEKKDISFCCSESYDTFHLGHINCPDCPKSFKTQTSYERHIFITHSWSCNDYPCSICNAKLRSGALLKLHEQQHQLRGKPFACKICGKDFMCSYHLKCHQKYSSCSANENDTMSCKVCDRVFYRLDNLCAHLKQHLGTQVVKKPEYMCHVCKNCFYSLSTLNIHIRTHTGEKPFDCDLCDKKFSALVALKKHRRYHTGEKPYTCTVCSQSFAVKEVLNRHMKRHTGERPHKCNECGKSFIQATQLRTHSKTHLRPYACSLCIQKFKTEKQLERHVKDHTRQKRASFACTECTRSFRTSALLKEHLDAGDHSPVKSTRAKRSAKMIERTDCAICDKNFDTTETLRNHIRSVHECDPDDIFGTEPPAKRKAKKTVVAAVAEEQKEQEDDVPARNTSAGSLISSKTDGNGVVVREFLVDEGDGNAQTIDLRKRGLHHLPLEGDKATESTAETDIKAESSKEKPSVSPVVKKEQRKSLAASLAAAIADNLEEPSSDDEFSGEVLTEEDLKLKENIAKLIDMLVDPQTLKKYGWPNSSEESVLCKVIENCGHDLAKGSEAYAELDYGSRMPILQLLFTVVIHNDSIKALLNNFPIDDVIEYVLGDEDQDQDQETDKGKDREADNTDTDTREDAVESEA</sequence>
<feature type="chain" id="PRO_0000047054" description="Protein suppressor of hairy wing">
    <location>
        <begin position="1"/>
        <end position="899"/>
    </location>
</feature>
<feature type="zinc finger region" description="C2H2-type 1; atypical" evidence="2">
    <location>
        <begin position="218"/>
        <end position="240"/>
    </location>
</feature>
<feature type="zinc finger region" description="C2H2-type 2" evidence="2">
    <location>
        <begin position="288"/>
        <end position="311"/>
    </location>
</feature>
<feature type="zinc finger region" description="C2H2-type 3; atypical" evidence="2">
    <location>
        <begin position="318"/>
        <end position="340"/>
    </location>
</feature>
<feature type="zinc finger region" description="C2H2-type 4" evidence="2">
    <location>
        <begin position="347"/>
        <end position="365"/>
    </location>
</feature>
<feature type="zinc finger region" description="C2H2-type 5" evidence="2">
    <location>
        <begin position="379"/>
        <end position="401"/>
    </location>
</feature>
<feature type="zinc finger region" description="C2H2-type 6" evidence="2">
    <location>
        <begin position="412"/>
        <end position="434"/>
    </location>
</feature>
<feature type="zinc finger region" description="C2H2-type 7" evidence="2">
    <location>
        <begin position="440"/>
        <end position="462"/>
    </location>
</feature>
<feature type="zinc finger region" description="C2H2-type 8" evidence="2">
    <location>
        <begin position="468"/>
        <end position="490"/>
    </location>
</feature>
<feature type="zinc finger region" description="C2H2-type 9" evidence="2">
    <location>
        <begin position="496"/>
        <end position="518"/>
    </location>
</feature>
<feature type="zinc finger region" description="C2H2-type 10" evidence="2">
    <location>
        <begin position="522"/>
        <end position="544"/>
    </location>
</feature>
<feature type="zinc finger region" description="C2H2-type 11" evidence="2">
    <location>
        <begin position="552"/>
        <end position="576"/>
    </location>
</feature>
<feature type="zinc finger region" description="C2H2-type 12" evidence="2">
    <location>
        <begin position="594"/>
        <end position="617"/>
    </location>
</feature>
<feature type="region of interest" description="Disordered" evidence="3">
    <location>
        <begin position="1"/>
        <end position="33"/>
    </location>
</feature>
<feature type="region of interest" description="Disordered" evidence="3">
    <location>
        <begin position="45"/>
        <end position="127"/>
    </location>
</feature>
<feature type="region of interest" description="Disordered" evidence="3">
    <location>
        <begin position="171"/>
        <end position="206"/>
    </location>
</feature>
<feature type="region of interest" description="Disordered" evidence="3">
    <location>
        <begin position="646"/>
        <end position="665"/>
    </location>
</feature>
<feature type="region of interest" description="Disordered" evidence="3">
    <location>
        <begin position="702"/>
        <end position="734"/>
    </location>
</feature>
<feature type="region of interest" description="Disordered" evidence="3">
    <location>
        <begin position="865"/>
        <end position="899"/>
    </location>
</feature>
<feature type="compositionally biased region" description="Basic and acidic residues" evidence="3">
    <location>
        <begin position="21"/>
        <end position="31"/>
    </location>
</feature>
<feature type="compositionally biased region" description="Low complexity" evidence="3">
    <location>
        <begin position="45"/>
        <end position="55"/>
    </location>
</feature>
<feature type="compositionally biased region" description="Polar residues" evidence="3">
    <location>
        <begin position="67"/>
        <end position="83"/>
    </location>
</feature>
<feature type="compositionally biased region" description="Polar residues" evidence="3">
    <location>
        <begin position="102"/>
        <end position="111"/>
    </location>
</feature>
<feature type="compositionally biased region" description="Acidic residues" evidence="3">
    <location>
        <begin position="183"/>
        <end position="198"/>
    </location>
</feature>
<feature type="compositionally biased region" description="Basic and acidic residues" evidence="3">
    <location>
        <begin position="874"/>
        <end position="899"/>
    </location>
</feature>
<comment type="function">
    <text evidence="1">Component of the gypsy chromatin insulator complex which is required for the function of the gypsy chromatin insulator and other endogenous chromatin insulators. Chromatin insulators are regulatory elements which establish independent domains of transcriptional activity within eukaryotic genomes. Insulators have two defining properties; they can block the communication between an enhancer and a promoter when placed between them and can also buffer transgenes from position effect variegation (PEV). Insulators are proposed to structure the chromatin fiber into independent domains of differing transcriptional potential by promoting the formation of distinct chromatin loops. This chromatin looping may involve the formation of insulator bodies, where homotypic interactions between individual subunits of the insulator complex could promote the clustering of widely spaced insulators at the nuclear periphery. Within the gypsy insulator complex, this protein binds specifically to a region of the gypsy element located 3' of the 5' long terminal repeat (LTR), and may also mediate interaction with other endogenous insulators at sites distinct from those recognized by Cp190. Cooperates with pita and cliff to recruit Cp190 and regulate insulator function at the front-ultraabdominal (Fub) boundary.</text>
</comment>
<comment type="subcellular location">
    <subcellularLocation>
        <location>Nucleus</location>
    </subcellularLocation>
</comment>
<organism>
    <name type="scientific">Drosophila virilis</name>
    <name type="common">Fruit fly</name>
    <dbReference type="NCBI Taxonomy" id="7244"/>
    <lineage>
        <taxon>Eukaryota</taxon>
        <taxon>Metazoa</taxon>
        <taxon>Ecdysozoa</taxon>
        <taxon>Arthropoda</taxon>
        <taxon>Hexapoda</taxon>
        <taxon>Insecta</taxon>
        <taxon>Pterygota</taxon>
        <taxon>Neoptera</taxon>
        <taxon>Endopterygota</taxon>
        <taxon>Diptera</taxon>
        <taxon>Brachycera</taxon>
        <taxon>Muscomorpha</taxon>
        <taxon>Ephydroidea</taxon>
        <taxon>Drosophilidae</taxon>
        <taxon>Drosophila</taxon>
    </lineage>
</organism>
<gene>
    <name type="primary">su(Hw)</name>
</gene>
<accession>Q08876</accession>
<name>SUHW_DROVI</name>